<comment type="function">
    <text evidence="1">Binds to the 23S rRNA.</text>
</comment>
<comment type="similarity">
    <text evidence="1">Belongs to the bacterial ribosomal protein bL9 family.</text>
</comment>
<gene>
    <name evidence="1" type="primary">rplI</name>
    <name type="ordered locus">SEQ_2204</name>
</gene>
<organism>
    <name type="scientific">Streptococcus equi subsp. equi (strain 4047)</name>
    <dbReference type="NCBI Taxonomy" id="553482"/>
    <lineage>
        <taxon>Bacteria</taxon>
        <taxon>Bacillati</taxon>
        <taxon>Bacillota</taxon>
        <taxon>Bacilli</taxon>
        <taxon>Lactobacillales</taxon>
        <taxon>Streptococcaceae</taxon>
        <taxon>Streptococcus</taxon>
    </lineage>
</organism>
<reference key="1">
    <citation type="journal article" date="2009" name="PLoS Pathog.">
        <title>Genomic evidence for the evolution of Streptococcus equi: host restriction, increased virulence, and genetic exchange with human pathogens.</title>
        <authorList>
            <person name="Holden M.T.G."/>
            <person name="Heather Z."/>
            <person name="Paillot R."/>
            <person name="Steward K.F."/>
            <person name="Webb K."/>
            <person name="Ainslie F."/>
            <person name="Jourdan T."/>
            <person name="Bason N.C."/>
            <person name="Holroyd N.E."/>
            <person name="Mungall K."/>
            <person name="Quail M.A."/>
            <person name="Sanders M."/>
            <person name="Simmonds M."/>
            <person name="Willey D."/>
            <person name="Brooks K."/>
            <person name="Aanensen D.M."/>
            <person name="Spratt B.G."/>
            <person name="Jolley K.A."/>
            <person name="Maiden M.C.J."/>
            <person name="Kehoe M."/>
            <person name="Chanter N."/>
            <person name="Bentley S.D."/>
            <person name="Robinson C."/>
            <person name="Maskell D.J."/>
            <person name="Parkhill J."/>
            <person name="Waller A.S."/>
        </authorList>
    </citation>
    <scope>NUCLEOTIDE SEQUENCE [LARGE SCALE GENOMIC DNA]</scope>
    <source>
        <strain>4047</strain>
    </source>
</reference>
<evidence type="ECO:0000255" key="1">
    <source>
        <dbReference type="HAMAP-Rule" id="MF_00503"/>
    </source>
</evidence>
<evidence type="ECO:0000305" key="2"/>
<accession>C0MB49</accession>
<protein>
    <recommendedName>
        <fullName evidence="1">Large ribosomal subunit protein bL9</fullName>
    </recommendedName>
    <alternativeName>
        <fullName evidence="2">50S ribosomal protein L9</fullName>
    </alternativeName>
</protein>
<name>RL9_STRE4</name>
<dbReference type="EMBL" id="FM204883">
    <property type="protein sequence ID" value="CAW95606.1"/>
    <property type="molecule type" value="Genomic_DNA"/>
</dbReference>
<dbReference type="RefSeq" id="WP_015898694.1">
    <property type="nucleotide sequence ID" value="NC_012471.1"/>
</dbReference>
<dbReference type="SMR" id="C0MB49"/>
<dbReference type="KEGG" id="seu:SEQ_2204"/>
<dbReference type="HOGENOM" id="CLU_078938_3_2_9"/>
<dbReference type="OrthoDB" id="9788336at2"/>
<dbReference type="Proteomes" id="UP000001365">
    <property type="component" value="Chromosome"/>
</dbReference>
<dbReference type="GO" id="GO:1990904">
    <property type="term" value="C:ribonucleoprotein complex"/>
    <property type="evidence" value="ECO:0007669"/>
    <property type="project" value="UniProtKB-KW"/>
</dbReference>
<dbReference type="GO" id="GO:0005840">
    <property type="term" value="C:ribosome"/>
    <property type="evidence" value="ECO:0007669"/>
    <property type="project" value="UniProtKB-KW"/>
</dbReference>
<dbReference type="GO" id="GO:0019843">
    <property type="term" value="F:rRNA binding"/>
    <property type="evidence" value="ECO:0007669"/>
    <property type="project" value="UniProtKB-UniRule"/>
</dbReference>
<dbReference type="GO" id="GO:0003735">
    <property type="term" value="F:structural constituent of ribosome"/>
    <property type="evidence" value="ECO:0007669"/>
    <property type="project" value="InterPro"/>
</dbReference>
<dbReference type="GO" id="GO:0006412">
    <property type="term" value="P:translation"/>
    <property type="evidence" value="ECO:0007669"/>
    <property type="project" value="UniProtKB-UniRule"/>
</dbReference>
<dbReference type="FunFam" id="3.40.5.10:FF:000002">
    <property type="entry name" value="50S ribosomal protein L9"/>
    <property type="match status" value="1"/>
</dbReference>
<dbReference type="Gene3D" id="3.10.430.100">
    <property type="entry name" value="Ribosomal protein L9, C-terminal domain"/>
    <property type="match status" value="1"/>
</dbReference>
<dbReference type="Gene3D" id="3.40.5.10">
    <property type="entry name" value="Ribosomal protein L9, N-terminal domain"/>
    <property type="match status" value="1"/>
</dbReference>
<dbReference type="HAMAP" id="MF_00503">
    <property type="entry name" value="Ribosomal_bL9"/>
    <property type="match status" value="1"/>
</dbReference>
<dbReference type="InterPro" id="IPR000244">
    <property type="entry name" value="Ribosomal_bL9"/>
</dbReference>
<dbReference type="InterPro" id="IPR009027">
    <property type="entry name" value="Ribosomal_bL9/RNase_H1_N"/>
</dbReference>
<dbReference type="InterPro" id="IPR020594">
    <property type="entry name" value="Ribosomal_bL9_bac/chp"/>
</dbReference>
<dbReference type="InterPro" id="IPR020069">
    <property type="entry name" value="Ribosomal_bL9_C"/>
</dbReference>
<dbReference type="InterPro" id="IPR036791">
    <property type="entry name" value="Ribosomal_bL9_C_sf"/>
</dbReference>
<dbReference type="InterPro" id="IPR020070">
    <property type="entry name" value="Ribosomal_bL9_N"/>
</dbReference>
<dbReference type="InterPro" id="IPR036935">
    <property type="entry name" value="Ribosomal_bL9_N_sf"/>
</dbReference>
<dbReference type="NCBIfam" id="TIGR00158">
    <property type="entry name" value="L9"/>
    <property type="match status" value="1"/>
</dbReference>
<dbReference type="PANTHER" id="PTHR21368">
    <property type="entry name" value="50S RIBOSOMAL PROTEIN L9"/>
    <property type="match status" value="1"/>
</dbReference>
<dbReference type="Pfam" id="PF03948">
    <property type="entry name" value="Ribosomal_L9_C"/>
    <property type="match status" value="1"/>
</dbReference>
<dbReference type="Pfam" id="PF01281">
    <property type="entry name" value="Ribosomal_L9_N"/>
    <property type="match status" value="1"/>
</dbReference>
<dbReference type="SUPFAM" id="SSF55658">
    <property type="entry name" value="L9 N-domain-like"/>
    <property type="match status" value="1"/>
</dbReference>
<dbReference type="SUPFAM" id="SSF55653">
    <property type="entry name" value="Ribosomal protein L9 C-domain"/>
    <property type="match status" value="1"/>
</dbReference>
<dbReference type="PROSITE" id="PS00651">
    <property type="entry name" value="RIBOSOMAL_L9"/>
    <property type="match status" value="1"/>
</dbReference>
<sequence length="150" mass="16693">MKVIFLVDVKGKGKKGEIKEVPTGYAQNFLIKKNLAKEASSQAIGQLRGQQKAEEKAQAEILAEAKAVKKILDDEKTRVQFKEKVGPDGRTFGSITAKKISEELQKQFKVKVDKRHIVLDHPIRAIGLIEVPVKLHKEVTAEIKLNIAEA</sequence>
<keyword id="KW-0687">Ribonucleoprotein</keyword>
<keyword id="KW-0689">Ribosomal protein</keyword>
<keyword id="KW-0694">RNA-binding</keyword>
<keyword id="KW-0699">rRNA-binding</keyword>
<feature type="chain" id="PRO_1000196265" description="Large ribosomal subunit protein bL9">
    <location>
        <begin position="1"/>
        <end position="150"/>
    </location>
</feature>
<proteinExistence type="inferred from homology"/>